<proteinExistence type="inferred from homology"/>
<protein>
    <recommendedName>
        <fullName evidence="5">Cytochrome P450 monooxygenase ausR</fullName>
        <ecNumber evidence="7">1.-.-.-</ecNumber>
    </recommendedName>
    <alternativeName>
        <fullName evidence="5">Austinoid biosynthesis clusters protein R</fullName>
    </alternativeName>
</protein>
<feature type="chain" id="PRO_0000453843" description="Cytochrome P450 monooxygenase ausR">
    <location>
        <begin position="1"/>
        <end position="496"/>
    </location>
</feature>
<feature type="transmembrane region" description="Helical" evidence="3">
    <location>
        <begin position="12"/>
        <end position="32"/>
    </location>
</feature>
<feature type="binding site" description="axial binding residue" evidence="1">
    <location>
        <position position="435"/>
    </location>
    <ligand>
        <name>heme</name>
        <dbReference type="ChEBI" id="CHEBI:30413"/>
    </ligand>
    <ligandPart>
        <name>Fe</name>
        <dbReference type="ChEBI" id="CHEBI:18248"/>
    </ligandPart>
</feature>
<accession>A0A0F7TN11</accession>
<keyword id="KW-0349">Heme</keyword>
<keyword id="KW-0408">Iron</keyword>
<keyword id="KW-0472">Membrane</keyword>
<keyword id="KW-0479">Metal-binding</keyword>
<keyword id="KW-0503">Monooxygenase</keyword>
<keyword id="KW-0560">Oxidoreductase</keyword>
<keyword id="KW-1185">Reference proteome</keyword>
<keyword id="KW-0812">Transmembrane</keyword>
<keyword id="KW-1133">Transmembrane helix</keyword>
<comment type="function">
    <text evidence="2 4">Cytochrome P450 monooxygenase; part of the gene cluster B that mediates the biosynthesis of the fungal meroterpenoid acetoxydehydroaustin (PubMed:29076725). The first step of the pathway is the synthesis of 3,5-dimethylorsellinic acid by the polyketide synthase ausA (By similarity). 3,5-dimethylorsellinic acid is then prenylated by the polyprenyl transferase ausN (By similarity). Further epoxidation by the FAD-dependent monooxygenase ausM and cyclization by the probable terpene cyclase ausL lead to the formation of protoaustinoid A (By similarity). Protoaustinoid A is then oxidized to spiro-lactone preaustinoid A3 by the combined action of the FAD-binding monooxygenases ausB and ausC, and the dioxygenase ausE (By similarity). Acid-catalyzed keto-rearrangement and ring contraction of the tetraketide portion of preaustinoid A3 by ausJ lead to the formation of preaustinoid A4 (By similarity). The aldo-keto reductase ausK, with the help of ausH, is involved in the next step by transforming preaustinoid A4 into isoaustinone which is in turn hydroxylated by the P450 monooxygenase ausI to form austinolide (By similarity). The cytochrome P450 monooxygenase ausG then modifies austinolide to austinol (By similarity). Austinol is further acetylated to austin by the O-acetyltransferase ausP, which spontaneously changes to dehydroaustin (PubMed:29076725). The cytochrome P450 monooxygenase then converts dehydroaustin is into 7-dehydrodehydroaustin (PubMed:29076725). The hydroxylation catalyzed by ausR permits the second O-acetyltransferase ausQ to add an additional acetyl group to the molecule, leading to the formation of acetoxydehydroaustin (PubMed:29076725). Due to genetic rearrangements of the clusters and the subsequent loss of some enzymes, the end product of the Penicillium brasilianum austinoid biosynthesis clusters is acetoxydehydroaustin (PubMed:29076725).</text>
</comment>
<comment type="cofactor">
    <cofactor evidence="1">
        <name>heme</name>
        <dbReference type="ChEBI" id="CHEBI:30413"/>
    </cofactor>
</comment>
<comment type="pathway">
    <text evidence="7">Secondary metabolite biosynthesis; terpenoid biosynthesis.</text>
</comment>
<comment type="subcellular location">
    <subcellularLocation>
        <location evidence="3">Membrane</location>
        <topology evidence="3">Single-pass membrane protein</topology>
    </subcellularLocation>
</comment>
<comment type="miscellaneous">
    <text evidence="7">In A.calidoustus, the austinoid gene cluster lies on a contiguous DNA region, while clusters from E.nidulans and P.brasilianum are split in their respective genomes. Genetic rearrangements provoked variability among the clusters and E.nidulans produces the least number of austionoid derivatives with the end products austinol and dehydroaustinol, while P.brasilianum can produce until acetoxydehydroaustin, and A.calidoustus produces the highest number of identified derivatives.</text>
</comment>
<comment type="similarity">
    <text evidence="6">Belongs to the cytochrome P450 family.</text>
</comment>
<reference key="1">
    <citation type="journal article" date="2015" name="Genome Announc.">
        <title>Draft genome sequence of the fungus Penicillium brasilianum MG11.</title>
        <authorList>
            <person name="Horn F."/>
            <person name="Linde J."/>
            <person name="Mattern D.J."/>
            <person name="Walther G."/>
            <person name="Guthke R."/>
            <person name="Brakhage A.A."/>
            <person name="Valiante V."/>
        </authorList>
    </citation>
    <scope>NUCLEOTIDE SEQUENCE [LARGE SCALE GENOMIC DNA]</scope>
    <source>
        <strain>MG11</strain>
    </source>
</reference>
<reference key="2">
    <citation type="journal article" date="2016" name="J. Am. Chem. Soc.">
        <title>Discovery of key dioxygenases that diverged the paraherquonin and acetoxydehydroaustin pathways in Penicillium brasilianum.</title>
        <authorList>
            <person name="Matsuda Y."/>
            <person name="Iwabuchi T."/>
            <person name="Fujimoto T."/>
            <person name="Awakawa T."/>
            <person name="Nakashima Y."/>
            <person name="Mori T."/>
            <person name="Zhang H."/>
            <person name="Hayashi F."/>
            <person name="Abe I."/>
        </authorList>
    </citation>
    <scope>FUNCTION</scope>
</reference>
<reference key="3">
    <citation type="journal article" date="2017" name="ACS Chem. Biol.">
        <title>Rewiring of the austinoid biosynthetic pathway in filamentous fungi.</title>
        <authorList>
            <person name="Mattern D.J."/>
            <person name="Valiante V."/>
            <person name="Horn F."/>
            <person name="Petzke L."/>
            <person name="Brakhage A.A."/>
        </authorList>
    </citation>
    <scope>FUNCTION</scope>
</reference>
<organism>
    <name type="scientific">Penicillium brasilianum</name>
    <dbReference type="NCBI Taxonomy" id="104259"/>
    <lineage>
        <taxon>Eukaryota</taxon>
        <taxon>Fungi</taxon>
        <taxon>Dikarya</taxon>
        <taxon>Ascomycota</taxon>
        <taxon>Pezizomycotina</taxon>
        <taxon>Eurotiomycetes</taxon>
        <taxon>Eurotiomycetidae</taxon>
        <taxon>Eurotiales</taxon>
        <taxon>Aspergillaceae</taxon>
        <taxon>Penicillium</taxon>
    </lineage>
</organism>
<sequence>MHSFSTLPNHRIGLYILWTIPVLFVIFKLLAPAKCSLPIVNGRRWFEIGQYQARRRFSLDGRGIILKGLQKARAFRVVSQKGPKIILGPEYANEVKSHPACNADVFIAKEFHAHVSGFEVLRPQHVMKDAIRLKLTRSIGALMRPISDETTLILETQWGNSNCWHELDLKSTIAALVSRVSAVMFVGEELGRDQKWLSIVTNYSSDMFVADLDLCKWPEILRPIATYFLSSCGKLRRHIQEAALMLDPILSEGNSTHGNKQNFLDWFEEIAGGRKYNPVLAQISLAAAAIDTTSDLIIQTLTDICRFPDSEKLQEELREEMVRVLRADGWEKSAMYNLKLLDSVLKETQRVKPVVVFGMGRYVTEQITLHDGTVIPKGETINVVNTRVWDSAVYENPLEWDPYRFLRRRDSGDHAAHLVSPTPDHMGFGLGKHSCPGRFFAATKIKILLCHILLKYDVKISDEASSKVVSSGNFLFPDATLRISVRRRQENLSIWD</sequence>
<evidence type="ECO:0000250" key="1">
    <source>
        <dbReference type="UniProtKB" id="P04798"/>
    </source>
</evidence>
<evidence type="ECO:0000250" key="2">
    <source>
        <dbReference type="UniProtKB" id="Q5AR29"/>
    </source>
</evidence>
<evidence type="ECO:0000255" key="3"/>
<evidence type="ECO:0000269" key="4">
    <source>
    </source>
</evidence>
<evidence type="ECO:0000303" key="5">
    <source>
    </source>
</evidence>
<evidence type="ECO:0000305" key="6"/>
<evidence type="ECO:0000305" key="7">
    <source>
    </source>
</evidence>
<dbReference type="EC" id="1.-.-.-" evidence="7"/>
<dbReference type="EMBL" id="CDHK01000006">
    <property type="protein sequence ID" value="CEJ58143.1"/>
    <property type="molecule type" value="Genomic_DNA"/>
</dbReference>
<dbReference type="SMR" id="A0A0F7TN11"/>
<dbReference type="STRING" id="104259.A0A0F7TN11"/>
<dbReference type="OrthoDB" id="1844152at2759"/>
<dbReference type="UniPathway" id="UPA00213"/>
<dbReference type="Proteomes" id="UP000042958">
    <property type="component" value="Unassembled WGS sequence"/>
</dbReference>
<dbReference type="GO" id="GO:0016020">
    <property type="term" value="C:membrane"/>
    <property type="evidence" value="ECO:0007669"/>
    <property type="project" value="UniProtKB-SubCell"/>
</dbReference>
<dbReference type="GO" id="GO:0020037">
    <property type="term" value="F:heme binding"/>
    <property type="evidence" value="ECO:0007669"/>
    <property type="project" value="InterPro"/>
</dbReference>
<dbReference type="GO" id="GO:0005506">
    <property type="term" value="F:iron ion binding"/>
    <property type="evidence" value="ECO:0007669"/>
    <property type="project" value="InterPro"/>
</dbReference>
<dbReference type="GO" id="GO:0004497">
    <property type="term" value="F:monooxygenase activity"/>
    <property type="evidence" value="ECO:0007669"/>
    <property type="project" value="UniProtKB-KW"/>
</dbReference>
<dbReference type="GO" id="GO:0016705">
    <property type="term" value="F:oxidoreductase activity, acting on paired donors, with incorporation or reduction of molecular oxygen"/>
    <property type="evidence" value="ECO:0007669"/>
    <property type="project" value="InterPro"/>
</dbReference>
<dbReference type="GO" id="GO:0043386">
    <property type="term" value="P:mycotoxin biosynthetic process"/>
    <property type="evidence" value="ECO:0007669"/>
    <property type="project" value="UniProtKB-ARBA"/>
</dbReference>
<dbReference type="GO" id="GO:0016114">
    <property type="term" value="P:terpenoid biosynthetic process"/>
    <property type="evidence" value="ECO:0007669"/>
    <property type="project" value="UniProtKB-UniPathway"/>
</dbReference>
<dbReference type="CDD" id="cd11041">
    <property type="entry name" value="CYP503A1-like"/>
    <property type="match status" value="1"/>
</dbReference>
<dbReference type="Gene3D" id="1.10.630.10">
    <property type="entry name" value="Cytochrome P450"/>
    <property type="match status" value="1"/>
</dbReference>
<dbReference type="InterPro" id="IPR001128">
    <property type="entry name" value="Cyt_P450"/>
</dbReference>
<dbReference type="InterPro" id="IPR017972">
    <property type="entry name" value="Cyt_P450_CS"/>
</dbReference>
<dbReference type="InterPro" id="IPR002403">
    <property type="entry name" value="Cyt_P450_E_grp-IV"/>
</dbReference>
<dbReference type="InterPro" id="IPR036396">
    <property type="entry name" value="Cyt_P450_sf"/>
</dbReference>
<dbReference type="PANTHER" id="PTHR46206">
    <property type="entry name" value="CYTOCHROME P450"/>
    <property type="match status" value="1"/>
</dbReference>
<dbReference type="PANTHER" id="PTHR46206:SF2">
    <property type="entry name" value="CYTOCHROME P450 MONOOXYGENASE AUSG-RELATED"/>
    <property type="match status" value="1"/>
</dbReference>
<dbReference type="Pfam" id="PF00067">
    <property type="entry name" value="p450"/>
    <property type="match status" value="1"/>
</dbReference>
<dbReference type="PRINTS" id="PR00465">
    <property type="entry name" value="EP450IV"/>
</dbReference>
<dbReference type="SUPFAM" id="SSF48264">
    <property type="entry name" value="Cytochrome P450"/>
    <property type="match status" value="1"/>
</dbReference>
<dbReference type="PROSITE" id="PS00086">
    <property type="entry name" value="CYTOCHROME_P450"/>
    <property type="match status" value="1"/>
</dbReference>
<gene>
    <name evidence="5" type="primary">ausR</name>
    <name type="ORF">PMG11_06813</name>
</gene>
<name>AUSR_PENBI</name>